<reference key="1">
    <citation type="submission" date="2007-10" db="EMBL/GenBank/DDBJ databases">
        <title>Complete sequence of chromosome of Desulforudis audaxviator MP104C.</title>
        <authorList>
            <person name="Copeland A."/>
            <person name="Lucas S."/>
            <person name="Lapidus A."/>
            <person name="Barry K."/>
            <person name="Glavina del Rio T."/>
            <person name="Dalin E."/>
            <person name="Tice H."/>
            <person name="Bruce D."/>
            <person name="Pitluck S."/>
            <person name="Lowry S.R."/>
            <person name="Larimer F."/>
            <person name="Land M.L."/>
            <person name="Hauser L."/>
            <person name="Kyrpides N."/>
            <person name="Ivanova N.N."/>
            <person name="Richardson P."/>
        </authorList>
    </citation>
    <scope>NUCLEOTIDE SEQUENCE [LARGE SCALE GENOMIC DNA]</scope>
    <source>
        <strain>MP104C</strain>
    </source>
</reference>
<keyword id="KW-0030">Aminoacyl-tRNA synthetase</keyword>
<keyword id="KW-0067">ATP-binding</keyword>
<keyword id="KW-0963">Cytoplasm</keyword>
<keyword id="KW-0436">Ligase</keyword>
<keyword id="KW-0460">Magnesium</keyword>
<keyword id="KW-0479">Metal-binding</keyword>
<keyword id="KW-0547">Nucleotide-binding</keyword>
<keyword id="KW-0648">Protein biosynthesis</keyword>
<keyword id="KW-1185">Reference proteome</keyword>
<dbReference type="EC" id="6.1.1.20" evidence="1"/>
<dbReference type="EMBL" id="CP000860">
    <property type="protein sequence ID" value="ACA59887.1"/>
    <property type="molecule type" value="Genomic_DNA"/>
</dbReference>
<dbReference type="RefSeq" id="WP_012302472.1">
    <property type="nucleotide sequence ID" value="NC_010424.1"/>
</dbReference>
<dbReference type="SMR" id="B1I4I5"/>
<dbReference type="STRING" id="477974.Daud_1378"/>
<dbReference type="KEGG" id="dau:Daud_1378"/>
<dbReference type="eggNOG" id="COG0016">
    <property type="taxonomic scope" value="Bacteria"/>
</dbReference>
<dbReference type="HOGENOM" id="CLU_025086_0_1_9"/>
<dbReference type="OrthoDB" id="9800719at2"/>
<dbReference type="Proteomes" id="UP000008544">
    <property type="component" value="Chromosome"/>
</dbReference>
<dbReference type="GO" id="GO:0005737">
    <property type="term" value="C:cytoplasm"/>
    <property type="evidence" value="ECO:0007669"/>
    <property type="project" value="UniProtKB-SubCell"/>
</dbReference>
<dbReference type="GO" id="GO:0005524">
    <property type="term" value="F:ATP binding"/>
    <property type="evidence" value="ECO:0007669"/>
    <property type="project" value="UniProtKB-UniRule"/>
</dbReference>
<dbReference type="GO" id="GO:0140096">
    <property type="term" value="F:catalytic activity, acting on a protein"/>
    <property type="evidence" value="ECO:0007669"/>
    <property type="project" value="UniProtKB-ARBA"/>
</dbReference>
<dbReference type="GO" id="GO:0000287">
    <property type="term" value="F:magnesium ion binding"/>
    <property type="evidence" value="ECO:0007669"/>
    <property type="project" value="UniProtKB-UniRule"/>
</dbReference>
<dbReference type="GO" id="GO:0004826">
    <property type="term" value="F:phenylalanine-tRNA ligase activity"/>
    <property type="evidence" value="ECO:0007669"/>
    <property type="project" value="UniProtKB-UniRule"/>
</dbReference>
<dbReference type="GO" id="GO:0016740">
    <property type="term" value="F:transferase activity"/>
    <property type="evidence" value="ECO:0007669"/>
    <property type="project" value="UniProtKB-ARBA"/>
</dbReference>
<dbReference type="GO" id="GO:0000049">
    <property type="term" value="F:tRNA binding"/>
    <property type="evidence" value="ECO:0007669"/>
    <property type="project" value="InterPro"/>
</dbReference>
<dbReference type="GO" id="GO:0006432">
    <property type="term" value="P:phenylalanyl-tRNA aminoacylation"/>
    <property type="evidence" value="ECO:0007669"/>
    <property type="project" value="UniProtKB-UniRule"/>
</dbReference>
<dbReference type="CDD" id="cd00496">
    <property type="entry name" value="PheRS_alpha_core"/>
    <property type="match status" value="1"/>
</dbReference>
<dbReference type="FunFam" id="3.30.930.10:FF:000003">
    <property type="entry name" value="Phenylalanine--tRNA ligase alpha subunit"/>
    <property type="match status" value="1"/>
</dbReference>
<dbReference type="Gene3D" id="3.30.930.10">
    <property type="entry name" value="Bira Bifunctional Protein, Domain 2"/>
    <property type="match status" value="1"/>
</dbReference>
<dbReference type="HAMAP" id="MF_00281">
    <property type="entry name" value="Phe_tRNA_synth_alpha1"/>
    <property type="match status" value="1"/>
</dbReference>
<dbReference type="InterPro" id="IPR006195">
    <property type="entry name" value="aa-tRNA-synth_II"/>
</dbReference>
<dbReference type="InterPro" id="IPR045864">
    <property type="entry name" value="aa-tRNA-synth_II/BPL/LPL"/>
</dbReference>
<dbReference type="InterPro" id="IPR004529">
    <property type="entry name" value="Phe-tRNA-synth_IIc_asu"/>
</dbReference>
<dbReference type="InterPro" id="IPR004188">
    <property type="entry name" value="Phe-tRNA_ligase_II_N"/>
</dbReference>
<dbReference type="InterPro" id="IPR022911">
    <property type="entry name" value="Phe_tRNA_ligase_alpha1_bac"/>
</dbReference>
<dbReference type="InterPro" id="IPR002319">
    <property type="entry name" value="Phenylalanyl-tRNA_Synthase"/>
</dbReference>
<dbReference type="InterPro" id="IPR010978">
    <property type="entry name" value="tRNA-bd_arm"/>
</dbReference>
<dbReference type="NCBIfam" id="TIGR00468">
    <property type="entry name" value="pheS"/>
    <property type="match status" value="1"/>
</dbReference>
<dbReference type="PANTHER" id="PTHR11538:SF41">
    <property type="entry name" value="PHENYLALANINE--TRNA LIGASE, MITOCHONDRIAL"/>
    <property type="match status" value="1"/>
</dbReference>
<dbReference type="PANTHER" id="PTHR11538">
    <property type="entry name" value="PHENYLALANYL-TRNA SYNTHETASE"/>
    <property type="match status" value="1"/>
</dbReference>
<dbReference type="Pfam" id="PF02912">
    <property type="entry name" value="Phe_tRNA-synt_N"/>
    <property type="match status" value="1"/>
</dbReference>
<dbReference type="Pfam" id="PF01409">
    <property type="entry name" value="tRNA-synt_2d"/>
    <property type="match status" value="1"/>
</dbReference>
<dbReference type="SUPFAM" id="SSF55681">
    <property type="entry name" value="Class II aaRS and biotin synthetases"/>
    <property type="match status" value="1"/>
</dbReference>
<dbReference type="SUPFAM" id="SSF46589">
    <property type="entry name" value="tRNA-binding arm"/>
    <property type="match status" value="1"/>
</dbReference>
<dbReference type="PROSITE" id="PS50862">
    <property type="entry name" value="AA_TRNA_LIGASE_II"/>
    <property type="match status" value="1"/>
</dbReference>
<organism>
    <name type="scientific">Desulforudis audaxviator (strain MP104C)</name>
    <dbReference type="NCBI Taxonomy" id="477974"/>
    <lineage>
        <taxon>Bacteria</taxon>
        <taxon>Bacillati</taxon>
        <taxon>Bacillota</taxon>
        <taxon>Clostridia</taxon>
        <taxon>Thermoanaerobacterales</taxon>
        <taxon>Candidatus Desulforudaceae</taxon>
        <taxon>Candidatus Desulforudis</taxon>
    </lineage>
</organism>
<proteinExistence type="inferred from homology"/>
<feature type="chain" id="PRO_1000114866" description="Phenylalanine--tRNA ligase alpha subunit">
    <location>
        <begin position="1"/>
        <end position="339"/>
    </location>
</feature>
<feature type="binding site" evidence="1">
    <location>
        <position position="254"/>
    </location>
    <ligand>
        <name>Mg(2+)</name>
        <dbReference type="ChEBI" id="CHEBI:18420"/>
        <note>shared with beta subunit</note>
    </ligand>
</feature>
<evidence type="ECO:0000255" key="1">
    <source>
        <dbReference type="HAMAP-Rule" id="MF_00281"/>
    </source>
</evidence>
<comment type="catalytic activity">
    <reaction evidence="1">
        <text>tRNA(Phe) + L-phenylalanine + ATP = L-phenylalanyl-tRNA(Phe) + AMP + diphosphate + H(+)</text>
        <dbReference type="Rhea" id="RHEA:19413"/>
        <dbReference type="Rhea" id="RHEA-COMP:9668"/>
        <dbReference type="Rhea" id="RHEA-COMP:9699"/>
        <dbReference type="ChEBI" id="CHEBI:15378"/>
        <dbReference type="ChEBI" id="CHEBI:30616"/>
        <dbReference type="ChEBI" id="CHEBI:33019"/>
        <dbReference type="ChEBI" id="CHEBI:58095"/>
        <dbReference type="ChEBI" id="CHEBI:78442"/>
        <dbReference type="ChEBI" id="CHEBI:78531"/>
        <dbReference type="ChEBI" id="CHEBI:456215"/>
        <dbReference type="EC" id="6.1.1.20"/>
    </reaction>
</comment>
<comment type="cofactor">
    <cofactor evidence="1">
        <name>Mg(2+)</name>
        <dbReference type="ChEBI" id="CHEBI:18420"/>
    </cofactor>
    <text evidence="1">Binds 2 magnesium ions per tetramer.</text>
</comment>
<comment type="subunit">
    <text evidence="1">Tetramer of two alpha and two beta subunits.</text>
</comment>
<comment type="subcellular location">
    <subcellularLocation>
        <location evidence="1">Cytoplasm</location>
    </subcellularLocation>
</comment>
<comment type="similarity">
    <text evidence="1">Belongs to the class-II aminoacyl-tRNA synthetase family. Phe-tRNA synthetase alpha subunit type 1 subfamily.</text>
</comment>
<sequence>MREKLAQVVEEAEKALAGASTAEVVEEVRIRYLGKKGVLTQVLRSMGSLPAAERPVVGKLANEMKVRLEQALASRSALLKQEEKAARLAAERIDVTLPGVLPHLGSMHPLTMVRTEIENIFLGLGFQIVEGPEVELEYYNFEALNFPKDHPARDMQDTFFINDEVLLRTHTSPVQVRTFEKTAPRVPVRIIAPGKVYREDDDATHSPMFNQVEGFAVDTRITLGDLKGTLVYFVREMFGERRMRFRPSFFPFTEPSAEVDISCVICGGGGCRVCSHTGWLEILGAGMIHPRVLEVSGYDAEKVSGFAFGMGIERVAMLKYGIDNIRLFFDNDLRFLNQF</sequence>
<accession>B1I4I5</accession>
<protein>
    <recommendedName>
        <fullName evidence="1">Phenylalanine--tRNA ligase alpha subunit</fullName>
        <ecNumber evidence="1">6.1.1.20</ecNumber>
    </recommendedName>
    <alternativeName>
        <fullName evidence="1">Phenylalanyl-tRNA synthetase alpha subunit</fullName>
        <shortName evidence="1">PheRS</shortName>
    </alternativeName>
</protein>
<gene>
    <name evidence="1" type="primary">pheS</name>
    <name type="ordered locus">Daud_1378</name>
</gene>
<name>SYFA_DESAP</name>